<evidence type="ECO:0000250" key="1">
    <source>
        <dbReference type="UniProtKB" id="P62841"/>
    </source>
</evidence>
<evidence type="ECO:0000269" key="2">
    <source>
    </source>
</evidence>
<evidence type="ECO:0000269" key="3">
    <source>
    </source>
</evidence>
<evidence type="ECO:0000269" key="4">
    <source>
    </source>
</evidence>
<evidence type="ECO:0000269" key="5">
    <source>
    </source>
</evidence>
<evidence type="ECO:0000269" key="6">
    <source>
    </source>
</evidence>
<evidence type="ECO:0000269" key="7">
    <source>
    </source>
</evidence>
<evidence type="ECO:0000269" key="8">
    <source>
    </source>
</evidence>
<evidence type="ECO:0000269" key="9">
    <source>
    </source>
</evidence>
<evidence type="ECO:0000269" key="10">
    <source>
    </source>
</evidence>
<evidence type="ECO:0000269" key="11">
    <source>
    </source>
</evidence>
<evidence type="ECO:0000269" key="12">
    <source>
    </source>
</evidence>
<evidence type="ECO:0000269" key="13">
    <source>
    </source>
</evidence>
<evidence type="ECO:0000269" key="14">
    <source>
    </source>
</evidence>
<evidence type="ECO:0000269" key="15">
    <source>
    </source>
</evidence>
<evidence type="ECO:0000269" key="16">
    <source>
    </source>
</evidence>
<evidence type="ECO:0000269" key="17">
    <source>
    </source>
</evidence>
<evidence type="ECO:0000305" key="18"/>
<evidence type="ECO:0007744" key="19">
    <source>
        <dbReference type="PDB" id="3JAG"/>
    </source>
</evidence>
<evidence type="ECO:0007744" key="20">
    <source>
        <dbReference type="PDB" id="3JAH"/>
    </source>
</evidence>
<evidence type="ECO:0007744" key="21">
    <source>
        <dbReference type="PDB" id="4D61"/>
    </source>
</evidence>
<evidence type="ECO:0007744" key="22">
    <source>
        <dbReference type="PDB" id="4KZX"/>
    </source>
</evidence>
<evidence type="ECO:0007744" key="23">
    <source>
        <dbReference type="PDB" id="4KZY"/>
    </source>
</evidence>
<evidence type="ECO:0007744" key="24">
    <source>
        <dbReference type="PDB" id="5LZU"/>
    </source>
</evidence>
<evidence type="ECO:0007744" key="25">
    <source>
        <dbReference type="PDB" id="6D90"/>
    </source>
</evidence>
<evidence type="ECO:0007744" key="26">
    <source>
        <dbReference type="PDB" id="6HCF"/>
    </source>
</evidence>
<evidence type="ECO:0007744" key="27">
    <source>
        <dbReference type="PDB" id="6HCJ"/>
    </source>
</evidence>
<evidence type="ECO:0007744" key="28">
    <source>
        <dbReference type="PDB" id="6MTB"/>
    </source>
</evidence>
<evidence type="ECO:0007744" key="29">
    <source>
        <dbReference type="PDB" id="6MTC"/>
    </source>
</evidence>
<evidence type="ECO:0007744" key="30">
    <source>
        <dbReference type="PDB" id="6P4G"/>
    </source>
</evidence>
<evidence type="ECO:0007744" key="31">
    <source>
        <dbReference type="PDB" id="6P4H"/>
    </source>
</evidence>
<evidence type="ECO:0007744" key="32">
    <source>
        <dbReference type="PDB" id="6R5Q"/>
    </source>
</evidence>
<evidence type="ECO:0007744" key="33">
    <source>
        <dbReference type="PDB" id="6R6G"/>
    </source>
</evidence>
<evidence type="ECO:0007744" key="34">
    <source>
        <dbReference type="PDB" id="6SGC"/>
    </source>
</evidence>
<evidence type="ECO:0007744" key="35">
    <source>
        <dbReference type="PDB" id="6W2S"/>
    </source>
</evidence>
<evidence type="ECO:0007744" key="36">
    <source>
        <dbReference type="PDB" id="6W2T"/>
    </source>
</evidence>
<evidence type="ECO:0007744" key="37">
    <source>
        <dbReference type="PDB" id="6ZVK"/>
    </source>
</evidence>
<evidence type="ECO:0007744" key="38">
    <source>
        <dbReference type="PDB" id="7A01"/>
    </source>
</evidence>
<evidence type="ECO:0007744" key="39">
    <source>
        <dbReference type="PDB" id="7OYD"/>
    </source>
</evidence>
<evidence type="ECO:0007744" key="40">
    <source>
        <dbReference type="PDB" id="7SYI"/>
    </source>
</evidence>
<evidence type="ECO:0007744" key="41">
    <source>
        <dbReference type="PDB" id="7SYJ"/>
    </source>
</evidence>
<evidence type="ECO:0007744" key="42">
    <source>
        <dbReference type="PDB" id="7UCJ"/>
    </source>
</evidence>
<evidence type="ECO:0007744" key="43">
    <source>
        <dbReference type="PDB" id="7UCK"/>
    </source>
</evidence>
<evidence type="ECO:0007744" key="44">
    <source>
        <dbReference type="PDB" id="7ZJW"/>
    </source>
</evidence>
<evidence type="ECO:0007744" key="45">
    <source>
        <dbReference type="PDB" id="7ZJX"/>
    </source>
</evidence>
<evidence type="ECO:0007829" key="46">
    <source>
        <dbReference type="PDB" id="6YAL"/>
    </source>
</evidence>
<evidence type="ECO:0007829" key="47">
    <source>
        <dbReference type="PDB" id="7JQB"/>
    </source>
</evidence>
<evidence type="ECO:0007829" key="48">
    <source>
        <dbReference type="PDB" id="8P03"/>
    </source>
</evidence>
<protein>
    <recommendedName>
        <fullName>Small ribosomal subunit protein uS19</fullName>
    </recommendedName>
    <alternativeName>
        <fullName>40S ribosomal protein S15</fullName>
    </alternativeName>
</protein>
<feature type="initiator methionine" description="Removed" evidence="1">
    <location>
        <position position="1"/>
    </location>
</feature>
<feature type="chain" id="PRO_0000460065" description="Small ribosomal subunit protein uS19">
    <location>
        <begin position="2"/>
        <end position="145"/>
    </location>
</feature>
<feature type="modified residue" description="N-acetylalanine" evidence="1">
    <location>
        <position position="2"/>
    </location>
</feature>
<feature type="cross-link" description="Glycyl lysine isopeptide (Lys-Gly) (interchain with G-Cter in SUMO2)" evidence="1">
    <location>
        <position position="108"/>
    </location>
</feature>
<feature type="strand" evidence="46">
    <location>
        <begin position="8"/>
        <end position="14"/>
    </location>
</feature>
<feature type="helix" evidence="48">
    <location>
        <begin position="17"/>
        <end position="19"/>
    </location>
</feature>
<feature type="helix" evidence="47">
    <location>
        <begin position="23"/>
        <end position="25"/>
    </location>
</feature>
<feature type="helix" evidence="47">
    <location>
        <begin position="30"/>
        <end position="33"/>
    </location>
</feature>
<feature type="turn" evidence="47">
    <location>
        <begin position="34"/>
        <end position="36"/>
    </location>
</feature>
<feature type="helix" evidence="47">
    <location>
        <begin position="39"/>
        <end position="47"/>
    </location>
</feature>
<feature type="helix" evidence="47">
    <location>
        <begin position="51"/>
        <end position="61"/>
    </location>
</feature>
<feature type="turn" evidence="47">
    <location>
        <begin position="62"/>
        <end position="64"/>
    </location>
</feature>
<feature type="strand" evidence="48">
    <location>
        <begin position="69"/>
        <end position="71"/>
    </location>
</feature>
<feature type="strand" evidence="47">
    <location>
        <begin position="76"/>
        <end position="78"/>
    </location>
</feature>
<feature type="helix" evidence="47">
    <location>
        <begin position="87"/>
        <end position="89"/>
    </location>
</feature>
<feature type="strand" evidence="47">
    <location>
        <begin position="93"/>
        <end position="97"/>
    </location>
</feature>
<feature type="strand" evidence="47">
    <location>
        <begin position="99"/>
        <end position="106"/>
    </location>
</feature>
<feature type="turn" evidence="47">
    <location>
        <begin position="110"/>
        <end position="113"/>
    </location>
</feature>
<feature type="turn" evidence="47">
    <location>
        <begin position="116"/>
        <end position="119"/>
    </location>
</feature>
<feature type="strand" evidence="47">
    <location>
        <begin position="135"/>
        <end position="138"/>
    </location>
</feature>
<dbReference type="EMBL" id="AAGW02031749">
    <property type="status" value="NOT_ANNOTATED_CDS"/>
    <property type="molecule type" value="Genomic_DNA"/>
</dbReference>
<dbReference type="RefSeq" id="XP_008259356.1">
    <property type="nucleotide sequence ID" value="XM_008261134.2"/>
</dbReference>
<dbReference type="RefSeq" id="XP_051684867.2">
    <property type="nucleotide sequence ID" value="XM_051828907.2"/>
</dbReference>
<dbReference type="PDB" id="3JAG">
    <property type="method" value="EM"/>
    <property type="resolution" value="3.65 A"/>
    <property type="chains" value="PP=4-130"/>
</dbReference>
<dbReference type="PDB" id="3JAH">
    <property type="method" value="EM"/>
    <property type="resolution" value="3.45 A"/>
    <property type="chains" value="PP=4-130"/>
</dbReference>
<dbReference type="PDB" id="3JAI">
    <property type="method" value="EM"/>
    <property type="resolution" value="3.65 A"/>
    <property type="chains" value="PP=4-130"/>
</dbReference>
<dbReference type="PDB" id="4D5L">
    <property type="method" value="EM"/>
    <property type="resolution" value="9.00 A"/>
    <property type="chains" value="P=1-145"/>
</dbReference>
<dbReference type="PDB" id="4D61">
    <property type="method" value="EM"/>
    <property type="resolution" value="9.00 A"/>
    <property type="chains" value="P=1-145"/>
</dbReference>
<dbReference type="PDB" id="4KZX">
    <property type="method" value="X-ray"/>
    <property type="resolution" value="7.81 A"/>
    <property type="chains" value="P=1-145"/>
</dbReference>
<dbReference type="PDB" id="4KZY">
    <property type="method" value="X-ray"/>
    <property type="resolution" value="7.01 A"/>
    <property type="chains" value="P=1-145"/>
</dbReference>
<dbReference type="PDB" id="4KZZ">
    <property type="method" value="X-ray"/>
    <property type="resolution" value="7.03 A"/>
    <property type="chains" value="P=1-145"/>
</dbReference>
<dbReference type="PDB" id="5K0Y">
    <property type="method" value="EM"/>
    <property type="resolution" value="5.80 A"/>
    <property type="chains" value="n=4-130"/>
</dbReference>
<dbReference type="PDB" id="5LZS">
    <property type="method" value="EM"/>
    <property type="resolution" value="3.31 A"/>
    <property type="chains" value="PP=1-145"/>
</dbReference>
<dbReference type="PDB" id="5LZT">
    <property type="method" value="EM"/>
    <property type="resolution" value="3.65 A"/>
    <property type="chains" value="PP=1-145"/>
</dbReference>
<dbReference type="PDB" id="5LZU">
    <property type="method" value="EM"/>
    <property type="resolution" value="3.75 A"/>
    <property type="chains" value="PP=1-145"/>
</dbReference>
<dbReference type="PDB" id="5LZV">
    <property type="method" value="EM"/>
    <property type="resolution" value="3.35 A"/>
    <property type="chains" value="PP=1-145"/>
</dbReference>
<dbReference type="PDB" id="5LZW">
    <property type="method" value="EM"/>
    <property type="resolution" value="3.53 A"/>
    <property type="chains" value="PP=1-145"/>
</dbReference>
<dbReference type="PDB" id="5LZX">
    <property type="method" value="EM"/>
    <property type="resolution" value="3.67 A"/>
    <property type="chains" value="PP=1-145"/>
</dbReference>
<dbReference type="PDB" id="5LZY">
    <property type="method" value="EM"/>
    <property type="resolution" value="3.99 A"/>
    <property type="chains" value="PP=1-145"/>
</dbReference>
<dbReference type="PDB" id="5LZZ">
    <property type="method" value="EM"/>
    <property type="resolution" value="3.47 A"/>
    <property type="chains" value="PP=1-145"/>
</dbReference>
<dbReference type="PDB" id="6D90">
    <property type="method" value="EM"/>
    <property type="resolution" value="3.20 A"/>
    <property type="chains" value="QQ=1-145"/>
</dbReference>
<dbReference type="PDB" id="6D9J">
    <property type="method" value="EM"/>
    <property type="resolution" value="3.20 A"/>
    <property type="chains" value="QQ=1-145"/>
</dbReference>
<dbReference type="PDB" id="6HCF">
    <property type="method" value="EM"/>
    <property type="resolution" value="3.90 A"/>
    <property type="chains" value="Q1=1-145"/>
</dbReference>
<dbReference type="PDB" id="6HCJ">
    <property type="method" value="EM"/>
    <property type="resolution" value="3.80 A"/>
    <property type="chains" value="Q2=1-145"/>
</dbReference>
<dbReference type="PDB" id="6HCM">
    <property type="method" value="EM"/>
    <property type="resolution" value="6.80 A"/>
    <property type="chains" value="Q1=1-145"/>
</dbReference>
<dbReference type="PDB" id="6HCQ">
    <property type="method" value="EM"/>
    <property type="resolution" value="6.50 A"/>
    <property type="chains" value="Q2=1-145"/>
</dbReference>
<dbReference type="PDB" id="6MTB">
    <property type="method" value="EM"/>
    <property type="resolution" value="3.60 A"/>
    <property type="chains" value="PP=12-131"/>
</dbReference>
<dbReference type="PDB" id="6MTC">
    <property type="method" value="EM"/>
    <property type="resolution" value="3.40 A"/>
    <property type="chains" value="PP=12-131"/>
</dbReference>
<dbReference type="PDB" id="6MTD">
    <property type="method" value="EM"/>
    <property type="resolution" value="3.30 A"/>
    <property type="chains" value="PP=12-131"/>
</dbReference>
<dbReference type="PDB" id="6MTE">
    <property type="method" value="EM"/>
    <property type="resolution" value="3.40 A"/>
    <property type="chains" value="PP=12-136"/>
</dbReference>
<dbReference type="PDB" id="6P4G">
    <property type="method" value="EM"/>
    <property type="resolution" value="3.10 A"/>
    <property type="chains" value="Q=1-145"/>
</dbReference>
<dbReference type="PDB" id="6P4H">
    <property type="method" value="EM"/>
    <property type="resolution" value="3.20 A"/>
    <property type="chains" value="Q=1-145"/>
</dbReference>
<dbReference type="PDB" id="6P5I">
    <property type="method" value="EM"/>
    <property type="resolution" value="3.10 A"/>
    <property type="chains" value="Q=1-145"/>
</dbReference>
<dbReference type="PDB" id="6P5J">
    <property type="method" value="EM"/>
    <property type="resolution" value="3.10 A"/>
    <property type="chains" value="Q=1-145"/>
</dbReference>
<dbReference type="PDB" id="6P5K">
    <property type="method" value="EM"/>
    <property type="resolution" value="3.10 A"/>
    <property type="chains" value="Q=1-145"/>
</dbReference>
<dbReference type="PDB" id="6P5N">
    <property type="method" value="EM"/>
    <property type="resolution" value="3.20 A"/>
    <property type="chains" value="Q=1-145"/>
</dbReference>
<dbReference type="PDB" id="6R5Q">
    <property type="method" value="EM"/>
    <property type="resolution" value="3.00 A"/>
    <property type="chains" value="WW=12-131"/>
</dbReference>
<dbReference type="PDB" id="6R6G">
    <property type="method" value="EM"/>
    <property type="resolution" value="3.70 A"/>
    <property type="chains" value="WW=12-131"/>
</dbReference>
<dbReference type="PDB" id="6R6P">
    <property type="method" value="EM"/>
    <property type="resolution" value="3.10 A"/>
    <property type="chains" value="9=12-131"/>
</dbReference>
<dbReference type="PDB" id="6R7Q">
    <property type="method" value="EM"/>
    <property type="resolution" value="3.90 A"/>
    <property type="chains" value="WW=12-131"/>
</dbReference>
<dbReference type="PDB" id="6SGC">
    <property type="method" value="EM"/>
    <property type="resolution" value="2.80 A"/>
    <property type="chains" value="Q1=1-145"/>
</dbReference>
<dbReference type="PDB" id="6W2S">
    <property type="method" value="EM"/>
    <property type="resolution" value="3.00 A"/>
    <property type="chains" value="Q=1-145"/>
</dbReference>
<dbReference type="PDB" id="6W2T">
    <property type="method" value="EM"/>
    <property type="resolution" value="3.36 A"/>
    <property type="chains" value="Q=1-145"/>
</dbReference>
<dbReference type="PDB" id="6YAL">
    <property type="method" value="EM"/>
    <property type="resolution" value="3.00 A"/>
    <property type="chains" value="R=1-145"/>
</dbReference>
<dbReference type="PDB" id="6YAM">
    <property type="method" value="EM"/>
    <property type="resolution" value="3.60 A"/>
    <property type="chains" value="R=1-145"/>
</dbReference>
<dbReference type="PDB" id="6YAN">
    <property type="method" value="EM"/>
    <property type="resolution" value="3.48 A"/>
    <property type="chains" value="R=4-138"/>
</dbReference>
<dbReference type="PDB" id="6ZVK">
    <property type="method" value="EM"/>
    <property type="resolution" value="3.49 A"/>
    <property type="chains" value="A3=4-130"/>
</dbReference>
<dbReference type="PDB" id="7A01">
    <property type="method" value="EM"/>
    <property type="resolution" value="3.60 A"/>
    <property type="chains" value="A3=4-130"/>
</dbReference>
<dbReference type="PDB" id="7JQB">
    <property type="method" value="EM"/>
    <property type="resolution" value="2.70 A"/>
    <property type="chains" value="Q=1-145"/>
</dbReference>
<dbReference type="PDB" id="7JQC">
    <property type="method" value="EM"/>
    <property type="resolution" value="3.30 A"/>
    <property type="chains" value="Q=1-145"/>
</dbReference>
<dbReference type="PDB" id="7MDZ">
    <property type="method" value="EM"/>
    <property type="resolution" value="3.20 A"/>
    <property type="chains" value="PP=1-145"/>
</dbReference>
<dbReference type="PDB" id="7NWG">
    <property type="method" value="EM"/>
    <property type="resolution" value="3.80 A"/>
    <property type="chains" value="Q2=1-145"/>
</dbReference>
<dbReference type="PDB" id="7NWH">
    <property type="method" value="EM"/>
    <property type="resolution" value="4.10 A"/>
    <property type="chains" value="PP=1-145"/>
</dbReference>
<dbReference type="PDB" id="7NWI">
    <property type="method" value="EM"/>
    <property type="resolution" value="3.13 A"/>
    <property type="chains" value="PP=1-145"/>
</dbReference>
<dbReference type="PDB" id="7O7Y">
    <property type="method" value="EM"/>
    <property type="resolution" value="2.20 A"/>
    <property type="chains" value="Ao=1-145"/>
</dbReference>
<dbReference type="PDB" id="7O7Z">
    <property type="method" value="EM"/>
    <property type="resolution" value="2.40 A"/>
    <property type="chains" value="Ao=1-145"/>
</dbReference>
<dbReference type="PDB" id="7O80">
    <property type="method" value="EM"/>
    <property type="resolution" value="2.90 A"/>
    <property type="chains" value="Ao=1-145"/>
</dbReference>
<dbReference type="PDB" id="7O81">
    <property type="method" value="EM"/>
    <property type="resolution" value="3.10 A"/>
    <property type="chains" value="Ao=1-145"/>
</dbReference>
<dbReference type="PDB" id="7OYD">
    <property type="method" value="EM"/>
    <property type="resolution" value="2.30 A"/>
    <property type="chains" value="PP=1-145"/>
</dbReference>
<dbReference type="PDB" id="7SYG">
    <property type="method" value="EM"/>
    <property type="resolution" value="4.30 A"/>
    <property type="chains" value="Q=1-145"/>
</dbReference>
<dbReference type="PDB" id="7SYH">
    <property type="method" value="EM"/>
    <property type="resolution" value="4.60 A"/>
    <property type="chains" value="Q=1-145"/>
</dbReference>
<dbReference type="PDB" id="7SYI">
    <property type="method" value="EM"/>
    <property type="resolution" value="4.50 A"/>
    <property type="chains" value="Q=1-145"/>
</dbReference>
<dbReference type="PDB" id="7SYJ">
    <property type="method" value="EM"/>
    <property type="resolution" value="4.80 A"/>
    <property type="chains" value="Q=1-145"/>
</dbReference>
<dbReference type="PDB" id="7SYK">
    <property type="method" value="EM"/>
    <property type="resolution" value="4.20 A"/>
    <property type="chains" value="Q=1-145"/>
</dbReference>
<dbReference type="PDB" id="7SYL">
    <property type="method" value="EM"/>
    <property type="resolution" value="4.50 A"/>
    <property type="chains" value="Q=1-145"/>
</dbReference>
<dbReference type="PDB" id="7SYM">
    <property type="method" value="EM"/>
    <property type="resolution" value="4.80 A"/>
    <property type="chains" value="Q=1-145"/>
</dbReference>
<dbReference type="PDB" id="7SYN">
    <property type="method" value="EM"/>
    <property type="resolution" value="4.00 A"/>
    <property type="chains" value="Q=1-145"/>
</dbReference>
<dbReference type="PDB" id="7SYO">
    <property type="method" value="EM"/>
    <property type="resolution" value="4.60 A"/>
    <property type="chains" value="Q=1-145"/>
</dbReference>
<dbReference type="PDB" id="7SYP">
    <property type="method" value="EM"/>
    <property type="resolution" value="4.00 A"/>
    <property type="chains" value="Q=1-145"/>
</dbReference>
<dbReference type="PDB" id="7SYQ">
    <property type="method" value="EM"/>
    <property type="resolution" value="3.80 A"/>
    <property type="chains" value="Q=1-145"/>
</dbReference>
<dbReference type="PDB" id="7SYR">
    <property type="method" value="EM"/>
    <property type="resolution" value="3.60 A"/>
    <property type="chains" value="Q=1-145"/>
</dbReference>
<dbReference type="PDB" id="7SYS">
    <property type="method" value="EM"/>
    <property type="resolution" value="3.50 A"/>
    <property type="chains" value="Q=1-145"/>
</dbReference>
<dbReference type="PDB" id="7SYT">
    <property type="method" value="EM"/>
    <property type="resolution" value="4.40 A"/>
    <property type="chains" value="Q=1-145"/>
</dbReference>
<dbReference type="PDB" id="7SYU">
    <property type="method" value="EM"/>
    <property type="resolution" value="4.60 A"/>
    <property type="chains" value="Q=1-145"/>
</dbReference>
<dbReference type="PDB" id="7SYV">
    <property type="method" value="EM"/>
    <property type="resolution" value="3.90 A"/>
    <property type="chains" value="Q=1-145"/>
</dbReference>
<dbReference type="PDB" id="7SYW">
    <property type="method" value="EM"/>
    <property type="resolution" value="3.70 A"/>
    <property type="chains" value="Q=1-145"/>
</dbReference>
<dbReference type="PDB" id="7SYX">
    <property type="method" value="EM"/>
    <property type="resolution" value="3.70 A"/>
    <property type="chains" value="Q=1-145"/>
</dbReference>
<dbReference type="PDB" id="7TOQ">
    <property type="method" value="EM"/>
    <property type="resolution" value="3.10 A"/>
    <property type="chains" value="AS15=12-131"/>
</dbReference>
<dbReference type="PDB" id="7TOR">
    <property type="method" value="EM"/>
    <property type="resolution" value="2.90 A"/>
    <property type="chains" value="AS15=12-131"/>
</dbReference>
<dbReference type="PDB" id="7UCJ">
    <property type="method" value="EM"/>
    <property type="resolution" value="3.10 A"/>
    <property type="chains" value="PP=12-131"/>
</dbReference>
<dbReference type="PDB" id="7UCK">
    <property type="method" value="EM"/>
    <property type="resolution" value="2.80 A"/>
    <property type="chains" value="PP=12-131"/>
</dbReference>
<dbReference type="PDB" id="7ZJW">
    <property type="method" value="EM"/>
    <property type="resolution" value="2.80 A"/>
    <property type="chains" value="Sa=1-145"/>
</dbReference>
<dbReference type="PDB" id="7ZJX">
    <property type="method" value="EM"/>
    <property type="resolution" value="3.10 A"/>
    <property type="chains" value="Sa=1-145"/>
</dbReference>
<dbReference type="PDB" id="8BHF">
    <property type="method" value="EM"/>
    <property type="resolution" value="3.10 A"/>
    <property type="chains" value="Q3=12-140"/>
</dbReference>
<dbReference type="PDB" id="8BTK">
    <property type="method" value="EM"/>
    <property type="resolution" value="3.50 A"/>
    <property type="chains" value="Ao=1-145"/>
</dbReference>
<dbReference type="PDB" id="8P03">
    <property type="method" value="EM"/>
    <property type="resolution" value="3.04 A"/>
    <property type="chains" value="R=1-145"/>
</dbReference>
<dbReference type="PDB" id="8P09">
    <property type="method" value="EM"/>
    <property type="resolution" value="3.30 A"/>
    <property type="chains" value="R=1-145"/>
</dbReference>
<dbReference type="PDB" id="8P2K">
    <property type="method" value="EM"/>
    <property type="resolution" value="2.90 A"/>
    <property type="chains" value="Ao=1-145"/>
</dbReference>
<dbReference type="PDB" id="8SCB">
    <property type="method" value="EM"/>
    <property type="resolution" value="2.50 A"/>
    <property type="chains" value="PP=1-145"/>
</dbReference>
<dbReference type="PDB" id="8VFT">
    <property type="method" value="EM"/>
    <property type="resolution" value="3.30 A"/>
    <property type="chains" value="PP=1-145"/>
</dbReference>
<dbReference type="PDB" id="9BDL">
    <property type="method" value="EM"/>
    <property type="resolution" value="2.80 A"/>
    <property type="chains" value="AS15=12-131"/>
</dbReference>
<dbReference type="PDB" id="9BDN">
    <property type="method" value="EM"/>
    <property type="resolution" value="3.10 A"/>
    <property type="chains" value="AS15=12-131"/>
</dbReference>
<dbReference type="PDB" id="9BDP">
    <property type="method" value="EM"/>
    <property type="resolution" value="3.70 A"/>
    <property type="chains" value="AS15=12-131"/>
</dbReference>
<dbReference type="PDB" id="9F1B">
    <property type="method" value="EM"/>
    <property type="resolution" value="3.01 A"/>
    <property type="chains" value="Ao=1-145"/>
</dbReference>
<dbReference type="PDB" id="9F1C">
    <property type="method" value="EM"/>
    <property type="resolution" value="3.78 A"/>
    <property type="chains" value="Ao=1-145"/>
</dbReference>
<dbReference type="PDB" id="9F1D">
    <property type="method" value="EM"/>
    <property type="resolution" value="3.26 A"/>
    <property type="chains" value="Ao=1-145"/>
</dbReference>
<dbReference type="PDBsum" id="3JAG"/>
<dbReference type="PDBsum" id="3JAH"/>
<dbReference type="PDBsum" id="3JAI"/>
<dbReference type="PDBsum" id="4D5L"/>
<dbReference type="PDBsum" id="4D61"/>
<dbReference type="PDBsum" id="4KZX"/>
<dbReference type="PDBsum" id="4KZY"/>
<dbReference type="PDBsum" id="4KZZ"/>
<dbReference type="PDBsum" id="5K0Y"/>
<dbReference type="PDBsum" id="5LZS"/>
<dbReference type="PDBsum" id="5LZT"/>
<dbReference type="PDBsum" id="5LZU"/>
<dbReference type="PDBsum" id="5LZV"/>
<dbReference type="PDBsum" id="5LZW"/>
<dbReference type="PDBsum" id="5LZX"/>
<dbReference type="PDBsum" id="5LZY"/>
<dbReference type="PDBsum" id="5LZZ"/>
<dbReference type="PDBsum" id="6D90"/>
<dbReference type="PDBsum" id="6D9J"/>
<dbReference type="PDBsum" id="6HCF"/>
<dbReference type="PDBsum" id="6HCJ"/>
<dbReference type="PDBsum" id="6HCM"/>
<dbReference type="PDBsum" id="6HCQ"/>
<dbReference type="PDBsum" id="6MTB"/>
<dbReference type="PDBsum" id="6MTC"/>
<dbReference type="PDBsum" id="6MTD"/>
<dbReference type="PDBsum" id="6MTE"/>
<dbReference type="PDBsum" id="6P4G"/>
<dbReference type="PDBsum" id="6P4H"/>
<dbReference type="PDBsum" id="6P5I"/>
<dbReference type="PDBsum" id="6P5J"/>
<dbReference type="PDBsum" id="6P5K"/>
<dbReference type="PDBsum" id="6P5N"/>
<dbReference type="PDBsum" id="6R5Q"/>
<dbReference type="PDBsum" id="6R6G"/>
<dbReference type="PDBsum" id="6R6P"/>
<dbReference type="PDBsum" id="6R7Q"/>
<dbReference type="PDBsum" id="6SGC"/>
<dbReference type="PDBsum" id="6W2S"/>
<dbReference type="PDBsum" id="6W2T"/>
<dbReference type="PDBsum" id="6YAL"/>
<dbReference type="PDBsum" id="6YAM"/>
<dbReference type="PDBsum" id="6YAN"/>
<dbReference type="PDBsum" id="6ZVK"/>
<dbReference type="PDBsum" id="7A01"/>
<dbReference type="PDBsum" id="7JQB"/>
<dbReference type="PDBsum" id="7JQC"/>
<dbReference type="PDBsum" id="7MDZ"/>
<dbReference type="PDBsum" id="7NWG"/>
<dbReference type="PDBsum" id="7NWH"/>
<dbReference type="PDBsum" id="7NWI"/>
<dbReference type="PDBsum" id="7O7Y"/>
<dbReference type="PDBsum" id="7O7Z"/>
<dbReference type="PDBsum" id="7O80"/>
<dbReference type="PDBsum" id="7O81"/>
<dbReference type="PDBsum" id="7OYD"/>
<dbReference type="PDBsum" id="7SYG"/>
<dbReference type="PDBsum" id="7SYH"/>
<dbReference type="PDBsum" id="7SYI"/>
<dbReference type="PDBsum" id="7SYJ"/>
<dbReference type="PDBsum" id="7SYK"/>
<dbReference type="PDBsum" id="7SYL"/>
<dbReference type="PDBsum" id="7SYM"/>
<dbReference type="PDBsum" id="7SYN"/>
<dbReference type="PDBsum" id="7SYO"/>
<dbReference type="PDBsum" id="7SYP"/>
<dbReference type="PDBsum" id="7SYQ"/>
<dbReference type="PDBsum" id="7SYR"/>
<dbReference type="PDBsum" id="7SYS"/>
<dbReference type="PDBsum" id="7SYT"/>
<dbReference type="PDBsum" id="7SYU"/>
<dbReference type="PDBsum" id="7SYV"/>
<dbReference type="PDBsum" id="7SYW"/>
<dbReference type="PDBsum" id="7SYX"/>
<dbReference type="PDBsum" id="7TOQ"/>
<dbReference type="PDBsum" id="7TOR"/>
<dbReference type="PDBsum" id="7UCJ"/>
<dbReference type="PDBsum" id="7UCK"/>
<dbReference type="PDBsum" id="7ZJW"/>
<dbReference type="PDBsum" id="7ZJX"/>
<dbReference type="PDBsum" id="8BHF"/>
<dbReference type="PDBsum" id="8BTK"/>
<dbReference type="PDBsum" id="8P03"/>
<dbReference type="PDBsum" id="8P09"/>
<dbReference type="PDBsum" id="8P2K"/>
<dbReference type="PDBsum" id="8SCB"/>
<dbReference type="PDBsum" id="8VFT"/>
<dbReference type="PDBsum" id="9BDL"/>
<dbReference type="PDBsum" id="9BDN"/>
<dbReference type="PDBsum" id="9BDP"/>
<dbReference type="PDBsum" id="9F1B"/>
<dbReference type="PDBsum" id="9F1C"/>
<dbReference type="PDBsum" id="9F1D"/>
<dbReference type="EMDB" id="EMD-0099"/>
<dbReference type="EMDB" id="EMD-0100"/>
<dbReference type="EMDB" id="EMD-0192"/>
<dbReference type="EMDB" id="EMD-0194"/>
<dbReference type="EMDB" id="EMD-0195"/>
<dbReference type="EMDB" id="EMD-0197"/>
<dbReference type="EMDB" id="EMD-10181"/>
<dbReference type="EMDB" id="EMD-10760"/>
<dbReference type="EMDB" id="EMD-10761"/>
<dbReference type="EMDB" id="EMD-10762"/>
<dbReference type="EMDB" id="EMD-11459"/>
<dbReference type="EMDB" id="EMD-11590"/>
<dbReference type="EMDB" id="EMD-12631"/>
<dbReference type="EMDB" id="EMD-12632"/>
<dbReference type="EMDB" id="EMD-12633"/>
<dbReference type="EMDB" id="EMD-12756"/>
<dbReference type="EMDB" id="EMD-12757"/>
<dbReference type="EMDB" id="EMD-12758"/>
<dbReference type="EMDB" id="EMD-12759"/>
<dbReference type="EMDB" id="EMD-13114"/>
<dbReference type="EMDB" id="EMD-14751"/>
<dbReference type="EMDB" id="EMD-14752"/>
<dbReference type="EMDB" id="EMD-16052"/>
<dbReference type="EMDB" id="EMD-16232"/>
<dbReference type="EMDB" id="EMD-17329"/>
<dbReference type="EMDB" id="EMD-17330"/>
<dbReference type="EMDB" id="EMD-17367"/>
<dbReference type="EMDB" id="EMD-20248"/>
<dbReference type="EMDB" id="EMD-20249"/>
<dbReference type="EMDB" id="EMD-20255"/>
<dbReference type="EMDB" id="EMD-20256"/>
<dbReference type="EMDB" id="EMD-20257"/>
<dbReference type="EMDB" id="EMD-20258"/>
<dbReference type="EMDB" id="EMD-21529"/>
<dbReference type="EMDB" id="EMD-21530"/>
<dbReference type="EMDB" id="EMD-22432"/>
<dbReference type="EMDB" id="EMD-22433"/>
<dbReference type="EMDB" id="EMD-23785"/>
<dbReference type="EMDB" id="EMD-25527"/>
<dbReference type="EMDB" id="EMD-25528"/>
<dbReference type="EMDB" id="EMD-25529"/>
<dbReference type="EMDB" id="EMD-25530"/>
<dbReference type="EMDB" id="EMD-25531"/>
<dbReference type="EMDB" id="EMD-25532"/>
<dbReference type="EMDB" id="EMD-25533"/>
<dbReference type="EMDB" id="EMD-25534"/>
<dbReference type="EMDB" id="EMD-25535"/>
<dbReference type="EMDB" id="EMD-25536"/>
<dbReference type="EMDB" id="EMD-25537"/>
<dbReference type="EMDB" id="EMD-25538"/>
<dbReference type="EMDB" id="EMD-25539"/>
<dbReference type="EMDB" id="EMD-25540"/>
<dbReference type="EMDB" id="EMD-25541"/>
<dbReference type="EMDB" id="EMD-25542"/>
<dbReference type="EMDB" id="EMD-25543"/>
<dbReference type="EMDB" id="EMD-25544"/>
<dbReference type="EMDB" id="EMD-26035"/>
<dbReference type="EMDB" id="EMD-26036"/>
<dbReference type="EMDB" id="EMD-26444"/>
<dbReference type="EMDB" id="EMD-26445"/>
<dbReference type="EMDB" id="EMD-40344"/>
<dbReference type="EMDB" id="EMD-4130"/>
<dbReference type="EMDB" id="EMD-4131"/>
<dbReference type="EMDB" id="EMD-4132"/>
<dbReference type="EMDB" id="EMD-4133"/>
<dbReference type="EMDB" id="EMD-4134"/>
<dbReference type="EMDB" id="EMD-4135"/>
<dbReference type="EMDB" id="EMD-4136"/>
<dbReference type="EMDB" id="EMD-4137"/>
<dbReference type="EMDB" id="EMD-43189"/>
<dbReference type="EMDB" id="EMD-44461"/>
<dbReference type="EMDB" id="EMD-44463"/>
<dbReference type="EMDB" id="EMD-44464"/>
<dbReference type="EMDB" id="EMD-45307"/>
<dbReference type="EMDB" id="EMD-4729"/>
<dbReference type="EMDB" id="EMD-4735"/>
<dbReference type="EMDB" id="EMD-4737"/>
<dbReference type="EMDB" id="EMD-4745"/>
<dbReference type="EMDB" id="EMD-50124"/>
<dbReference type="EMDB" id="EMD-50125"/>
<dbReference type="EMDB" id="EMD-50126"/>
<dbReference type="EMDB" id="EMD-7834"/>
<dbReference type="EMDB" id="EMD-7836"/>
<dbReference type="EMDB" id="EMD-8190"/>
<dbReference type="EMDB" id="EMD-9237"/>
<dbReference type="EMDB" id="EMD-9239"/>
<dbReference type="EMDB" id="EMD-9240"/>
<dbReference type="EMDB" id="EMD-9242"/>
<dbReference type="SMR" id="G1U0Q2"/>
<dbReference type="FunCoup" id="G1U0Q2">
    <property type="interactions" value="1540"/>
</dbReference>
<dbReference type="IntAct" id="G1U0Q2">
    <property type="interactions" value="1"/>
</dbReference>
<dbReference type="STRING" id="9986.ENSOCUP00000022933"/>
<dbReference type="PaxDb" id="9986-ENSOCUP00000022933"/>
<dbReference type="Ensembl" id="ENSOCUT00000002860.2">
    <property type="protein sequence ID" value="ENSOCUP00000022933.1"/>
    <property type="gene ID" value="ENSOCUG00000002862.2"/>
</dbReference>
<dbReference type="GeneID" id="127482706"/>
<dbReference type="KEGG" id="ocu:103349305"/>
<dbReference type="eggNOG" id="KOG0898">
    <property type="taxonomic scope" value="Eukaryota"/>
</dbReference>
<dbReference type="GeneTree" id="ENSGT00390000000475"/>
<dbReference type="HOGENOM" id="CLU_097347_1_0_1"/>
<dbReference type="InParanoid" id="G1U0Q2"/>
<dbReference type="OMA" id="KTHCRDM"/>
<dbReference type="OrthoDB" id="10258210at2759"/>
<dbReference type="TreeFam" id="TF318650"/>
<dbReference type="EvolutionaryTrace" id="G1U0Q2"/>
<dbReference type="Proteomes" id="UP000001811">
    <property type="component" value="Chromosome 9"/>
</dbReference>
<dbReference type="Bgee" id="ENSOCUG00000002862">
    <property type="expression patterns" value="Expressed in ovary and 19 other cell types or tissues"/>
</dbReference>
<dbReference type="GO" id="GO:0022626">
    <property type="term" value="C:cytosolic ribosome"/>
    <property type="evidence" value="ECO:0000314"/>
    <property type="project" value="UniProtKB"/>
</dbReference>
<dbReference type="GO" id="GO:0022627">
    <property type="term" value="C:cytosolic small ribosomal subunit"/>
    <property type="evidence" value="ECO:0007669"/>
    <property type="project" value="Ensembl"/>
</dbReference>
<dbReference type="GO" id="GO:0097371">
    <property type="term" value="F:MDM2/MDM4 family protein binding"/>
    <property type="evidence" value="ECO:0007669"/>
    <property type="project" value="Ensembl"/>
</dbReference>
<dbReference type="GO" id="GO:0003723">
    <property type="term" value="F:RNA binding"/>
    <property type="evidence" value="ECO:0007669"/>
    <property type="project" value="InterPro"/>
</dbReference>
<dbReference type="GO" id="GO:0003735">
    <property type="term" value="F:structural constituent of ribosome"/>
    <property type="evidence" value="ECO:0000314"/>
    <property type="project" value="UniProtKB"/>
</dbReference>
<dbReference type="GO" id="GO:1990948">
    <property type="term" value="F:ubiquitin ligase inhibitor activity"/>
    <property type="evidence" value="ECO:0007669"/>
    <property type="project" value="Ensembl"/>
</dbReference>
<dbReference type="GO" id="GO:1901798">
    <property type="term" value="P:positive regulation of signal transduction by p53 class mediator"/>
    <property type="evidence" value="ECO:0007669"/>
    <property type="project" value="Ensembl"/>
</dbReference>
<dbReference type="GO" id="GO:0000028">
    <property type="term" value="P:ribosomal small subunit assembly"/>
    <property type="evidence" value="ECO:0007669"/>
    <property type="project" value="TreeGrafter"/>
</dbReference>
<dbReference type="GO" id="GO:0000056">
    <property type="term" value="P:ribosomal small subunit export from nucleus"/>
    <property type="evidence" value="ECO:0007669"/>
    <property type="project" value="Ensembl"/>
</dbReference>
<dbReference type="GO" id="GO:0006364">
    <property type="term" value="P:rRNA processing"/>
    <property type="evidence" value="ECO:0007669"/>
    <property type="project" value="Ensembl"/>
</dbReference>
<dbReference type="GO" id="GO:0006412">
    <property type="term" value="P:translation"/>
    <property type="evidence" value="ECO:0007669"/>
    <property type="project" value="InterPro"/>
</dbReference>
<dbReference type="FunFam" id="3.30.860.10:FF:000002">
    <property type="entry name" value="40S ribosomal protein S15"/>
    <property type="match status" value="1"/>
</dbReference>
<dbReference type="Gene3D" id="3.30.860.10">
    <property type="entry name" value="30s Ribosomal Protein S19, Chain A"/>
    <property type="match status" value="1"/>
</dbReference>
<dbReference type="HAMAP" id="MF_00531">
    <property type="entry name" value="Ribosomal_uS19"/>
    <property type="match status" value="1"/>
</dbReference>
<dbReference type="InterPro" id="IPR002222">
    <property type="entry name" value="Ribosomal_uS19"/>
</dbReference>
<dbReference type="InterPro" id="IPR020934">
    <property type="entry name" value="Ribosomal_uS19_CS"/>
</dbReference>
<dbReference type="InterPro" id="IPR005713">
    <property type="entry name" value="Ribosomal_uS19_euk/arc"/>
</dbReference>
<dbReference type="InterPro" id="IPR023575">
    <property type="entry name" value="Ribosomal_uS19_SF"/>
</dbReference>
<dbReference type="NCBIfam" id="NF003121">
    <property type="entry name" value="PRK04038.1"/>
    <property type="match status" value="1"/>
</dbReference>
<dbReference type="NCBIfam" id="TIGR01025">
    <property type="entry name" value="uS19_arch"/>
    <property type="match status" value="1"/>
</dbReference>
<dbReference type="PANTHER" id="PTHR11880">
    <property type="entry name" value="RIBOSOMAL PROTEIN S19P FAMILY MEMBER"/>
    <property type="match status" value="1"/>
</dbReference>
<dbReference type="PANTHER" id="PTHR11880:SF2">
    <property type="entry name" value="SMALL RIBOSOMAL SUBUNIT PROTEIN US19"/>
    <property type="match status" value="1"/>
</dbReference>
<dbReference type="Pfam" id="PF00203">
    <property type="entry name" value="Ribosomal_S19"/>
    <property type="match status" value="1"/>
</dbReference>
<dbReference type="PIRSF" id="PIRSF002144">
    <property type="entry name" value="Ribosomal_S19"/>
    <property type="match status" value="1"/>
</dbReference>
<dbReference type="PRINTS" id="PR00975">
    <property type="entry name" value="RIBOSOMALS19"/>
</dbReference>
<dbReference type="SUPFAM" id="SSF54570">
    <property type="entry name" value="Ribosomal protein S19"/>
    <property type="match status" value="1"/>
</dbReference>
<dbReference type="PROSITE" id="PS00323">
    <property type="entry name" value="RIBOSOMAL_S19"/>
    <property type="match status" value="1"/>
</dbReference>
<name>RS15_RABIT</name>
<reference key="1">
    <citation type="journal article" date="2011" name="Nature">
        <title>A high-resolution map of human evolutionary constraint using 29 mammals.</title>
        <authorList>
            <person name="Lindblad-Toh K."/>
            <person name="Garber M."/>
            <person name="Zuk O."/>
            <person name="Lin M.F."/>
            <person name="Parker B.J."/>
            <person name="Washietl S."/>
            <person name="Kheradpour P."/>
            <person name="Ernst J."/>
            <person name="Jordan G."/>
            <person name="Mauceli E."/>
            <person name="Ward L.D."/>
            <person name="Lowe C.B."/>
            <person name="Holloway A.K."/>
            <person name="Clamp M."/>
            <person name="Gnerre S."/>
            <person name="Alfoldi J."/>
            <person name="Beal K."/>
            <person name="Chang J."/>
            <person name="Clawson H."/>
            <person name="Cuff J."/>
            <person name="Di Palma F."/>
            <person name="Fitzgerald S."/>
            <person name="Flicek P."/>
            <person name="Guttman M."/>
            <person name="Hubisz M.J."/>
            <person name="Jaffe D.B."/>
            <person name="Jungreis I."/>
            <person name="Kent W.J."/>
            <person name="Kostka D."/>
            <person name="Lara M."/>
            <person name="Martins A.L."/>
            <person name="Massingham T."/>
            <person name="Moltke I."/>
            <person name="Raney B.J."/>
            <person name="Rasmussen M.D."/>
            <person name="Robinson J."/>
            <person name="Stark A."/>
            <person name="Vilella A.J."/>
            <person name="Wen J."/>
            <person name="Xie X."/>
            <person name="Zody M.C."/>
            <person name="Baldwin J."/>
            <person name="Bloom T."/>
            <person name="Chin C.W."/>
            <person name="Heiman D."/>
            <person name="Nicol R."/>
            <person name="Nusbaum C."/>
            <person name="Young S."/>
            <person name="Wilkinson J."/>
            <person name="Worley K.C."/>
            <person name="Kovar C.L."/>
            <person name="Muzny D.M."/>
            <person name="Gibbs R.A."/>
            <person name="Cree A."/>
            <person name="Dihn H.H."/>
            <person name="Fowler G."/>
            <person name="Jhangiani S."/>
            <person name="Joshi V."/>
            <person name="Lee S."/>
            <person name="Lewis L.R."/>
            <person name="Nazareth L.V."/>
            <person name="Okwuonu G."/>
            <person name="Santibanez J."/>
            <person name="Warren W.C."/>
            <person name="Mardis E.R."/>
            <person name="Weinstock G.M."/>
            <person name="Wilson R.K."/>
            <person name="Delehaunty K."/>
            <person name="Dooling D."/>
            <person name="Fronik C."/>
            <person name="Fulton L."/>
            <person name="Fulton B."/>
            <person name="Graves T."/>
            <person name="Minx P."/>
            <person name="Sodergren E."/>
            <person name="Birney E."/>
            <person name="Margulies E.H."/>
            <person name="Herrero J."/>
            <person name="Green E.D."/>
            <person name="Haussler D."/>
            <person name="Siepel A."/>
            <person name="Goldman N."/>
            <person name="Pollard K.S."/>
            <person name="Pedersen J.S."/>
            <person name="Lander E.S."/>
            <person name="Kellis M."/>
        </authorList>
    </citation>
    <scope>NUCLEOTIDE SEQUENCE [LARGE SCALE GENOMIC DNA]</scope>
    <source>
        <strain>Thorbecke</strain>
    </source>
</reference>
<reference evidence="22 23" key="2">
    <citation type="journal article" date="2013" name="Nature">
        <title>The initiation of mammalian protein synthesis and mRNA scanning mechanism.</title>
        <authorList>
            <person name="Lomakin I.B."/>
            <person name="Steitz T.A."/>
        </authorList>
    </citation>
    <scope>X-RAY CRYSTALLOGRAPHY (7.01 ANGSTROMS) OF 40S RIBOSOME</scope>
    <scope>FUNCTION</scope>
    <scope>SUBUNIT</scope>
    <scope>SUBCELLULAR LOCATION</scope>
</reference>
<reference evidence="21" key="3">
    <citation type="journal article" date="2015" name="Mol. Cell">
        <title>Cryo-EM of ribosomal 80S complexes with termination factors reveals the translocated cricket paralysis virus IRES.</title>
        <authorList>
            <person name="Muhs M."/>
            <person name="Hilal T."/>
            <person name="Mielke T."/>
            <person name="Skabkin M.A."/>
            <person name="Sanbonmatsu K.Y."/>
            <person name="Pestova T.V."/>
            <person name="Spahn C.M."/>
        </authorList>
    </citation>
    <scope>STRUCTURE BY ELECTRON MICROSCOPY (9.00 ANGSTROMS) OF RIBOSOME</scope>
    <scope>FUNCTION</scope>
    <scope>SUBUNIT</scope>
    <scope>SUBCELLULAR LOCATION</scope>
</reference>
<reference evidence="19 20" key="4">
    <citation type="journal article" date="2015" name="Nature">
        <title>Structural basis for stop codon recognition in eukaryotes.</title>
        <authorList>
            <person name="Brown A."/>
            <person name="Shao S."/>
            <person name="Murray J."/>
            <person name="Hegde R.S."/>
            <person name="Ramakrishnan V."/>
        </authorList>
    </citation>
    <scope>STRUCTURE BY ELECTRON MICROSCOPY (3.45 ANGSTROMS) OF RIBOSOME</scope>
    <scope>FUNCTION</scope>
    <scope>SUBUNIT</scope>
    <scope>SUBCELLULAR LOCATION</scope>
</reference>
<reference evidence="24" key="5">
    <citation type="journal article" date="2016" name="Cell">
        <title>Decoding mammalian ribosome-mRNA states by translational GTPase complexes.</title>
        <authorList>
            <person name="Shao S."/>
            <person name="Murray J."/>
            <person name="Brown A."/>
            <person name="Taunton J."/>
            <person name="Ramakrishnan V."/>
            <person name="Hegde R.S."/>
        </authorList>
    </citation>
    <scope>STRUCTURE BY ELECTRON MICROSCOPY (3.31 ANGSTROMS) OF RIBOSOME</scope>
    <scope>FUNCTION</scope>
    <scope>SUBCELLULAR LOCATION</scope>
    <scope>SUBUNIT</scope>
</reference>
<reference evidence="25" key="6">
    <citation type="journal article" date="2018" name="Elife">
        <title>Dual tRNA mimicry in the Cricket paralysis virus IRES uncovers an unexpected similarity with the Hepatitis C Virus IRES.</title>
        <authorList>
            <person name="Pisareva V.P."/>
            <person name="Pisarev A.V."/>
            <person name="Fernandez I.S."/>
        </authorList>
    </citation>
    <scope>STRUCTURE BY ELECTRON MICROSCOPY (3.20 ANGSTROMS) OF RIBOSOME</scope>
    <scope>SUBUNIT</scope>
    <scope>SUBCELLULAR LOCATION</scope>
</reference>
<reference evidence="28 29" key="7">
    <citation type="journal article" date="2018" name="Elife">
        <title>Structures of translationally inactive mammalian ribosomes.</title>
        <authorList>
            <person name="Brown A."/>
            <person name="Baird M.R."/>
            <person name="Yip M.C."/>
            <person name="Murray J."/>
            <person name="Shao S."/>
        </authorList>
    </citation>
    <scope>STRUCTURE BY ELECTRON MICROSCOPY (3.30 ANGSTROMS) OF RIBOSOME</scope>
    <scope>SUBCELLULAR LOCATION</scope>
    <scope>SUBUNIT</scope>
</reference>
<reference evidence="26 27" key="8">
    <citation type="journal article" date="2018" name="Mol. Cell">
        <title>ZNF598 is a quality control sensor of collided ribosomes.</title>
        <authorList>
            <person name="Juszkiewicz S."/>
            <person name="Chandrasekaran V."/>
            <person name="Lin Z."/>
            <person name="Kraatz S."/>
            <person name="Ramakrishnan V."/>
            <person name="Hegde R.S."/>
        </authorList>
    </citation>
    <scope>STRUCTURE BY ELECTRON MICROSCOPY (3.80 ANGSTROMS) OF RIBOSOME</scope>
    <scope>SUBCELLULAR LOCATION</scope>
    <scope>SUBUNIT</scope>
</reference>
<reference evidence="32 33" key="9">
    <citation type="journal article" date="2019" name="Elife">
        <title>Structural and mutational analysis of the ribosome-arresting human XBP1u.</title>
        <authorList>
            <person name="Shanmuganathan V."/>
            <person name="Schiller N."/>
            <person name="Magoulopoulou A."/>
            <person name="Cheng J."/>
            <person name="Braunger K."/>
            <person name="Cymer F."/>
            <person name="Berninghausen O."/>
            <person name="Beatrix B."/>
            <person name="Kohno K."/>
            <person name="von Heijne G."/>
            <person name="Beckmann R."/>
        </authorList>
    </citation>
    <scope>STRUCTURE BY ELECTRON MICROSCOPY (3.00 ANGSTROMS) OF RIBOSOME</scope>
    <scope>SUBCELLULAR LOCATION</scope>
    <scope>SUBUNIT</scope>
</reference>
<reference evidence="30 31" key="10">
    <citation type="journal article" date="2019" name="EMBO J.">
        <title>The Israeli acute paralysis virus IRES captures host ribosomes by mimicking a ribosomal state with hybrid tRNAs.</title>
        <authorList>
            <person name="Acosta-Reyes F."/>
            <person name="Neupane R."/>
            <person name="Frank J."/>
            <person name="Fernandez I.S."/>
        </authorList>
    </citation>
    <scope>STRUCTURE BY ELECTRON MICROSCOPY (3.10 ANGSTROMS) OF RIBOSOME</scope>
    <scope>SUBUNIT</scope>
    <scope>SUBCELLULAR LOCATION</scope>
</reference>
<reference evidence="34" key="11">
    <citation type="journal article" date="2019" name="Nat. Struct. Mol. Biol.">
        <title>Mechanism of ribosome stalling during translation of a poly(A) tail.</title>
        <authorList>
            <person name="Chandrasekaran V."/>
            <person name="Juszkiewicz S."/>
            <person name="Choi J."/>
            <person name="Puglisi J.D."/>
            <person name="Brown A."/>
            <person name="Shao S."/>
            <person name="Ramakrishnan V."/>
            <person name="Hegde R.S."/>
        </authorList>
    </citation>
    <scope>STRUCTURE BY ELECTRON MICROSCOPY (2.80 ANGSTROMS) OF RIBOSOME</scope>
    <scope>SUBCELLULAR LOCATION</scope>
    <scope>SUBUNIT</scope>
</reference>
<reference evidence="37 38" key="12">
    <citation type="journal article" date="2020" name="Cell Rep.">
        <title>The Halastavi arva virus intergenic region IRES promotes translation by the simplest possible initiation mechanism.</title>
        <authorList>
            <person name="Abaeva I.S."/>
            <person name="Vicens Q."/>
            <person name="Bochler A."/>
            <person name="Soufari H."/>
            <person name="Simonetti A."/>
            <person name="Pestova T.V."/>
            <person name="Hashem Y."/>
            <person name="Hellen C.U.T."/>
        </authorList>
    </citation>
    <scope>STRUCTURE BY ELECTRON MICROSCOPY (3.49 ANGSTROMS) OF RIBOSOME</scope>
    <scope>SUBCELLULAR LOCATION</scope>
    <scope>SUBUNIT</scope>
</reference>
<reference evidence="35 36" key="13">
    <citation type="journal article" date="2020" name="Elife">
        <title>A complex IRES at the 5'-UTR of a viral mRNA assembles a functional 48S complex via an uAUG intermediate.</title>
        <authorList>
            <person name="Neupane R."/>
            <person name="Pisareva V.P."/>
            <person name="Rodriguez C.F."/>
            <person name="Pisarev A.V."/>
            <person name="Fernandez I.S."/>
        </authorList>
    </citation>
    <scope>STRUCTURE BY ELECTRON MICROSCOPY (3.00 ANGSTROMS) OF RIBOSOME</scope>
    <scope>SUBUNIT</scope>
    <scope>SUBCELLULAR LOCATION</scope>
</reference>
<reference evidence="40 41" key="14">
    <citation type="journal article" date="2022" name="EMBO J.">
        <title>Molecular architecture of 40S translation initiation complexes on the hepatitis C virus IRES.</title>
        <authorList>
            <person name="Brown Z.P."/>
            <person name="Abaeva I.S."/>
            <person name="De S."/>
            <person name="Hellen C.U.T."/>
            <person name="Pestova T.V."/>
            <person name="Frank J."/>
        </authorList>
    </citation>
    <scope>STRUCTURE BY ELECTRON MICROSCOPY (3.50 ANGSTROMS) OF RIBOSOME</scope>
    <scope>SUBCELLULAR LOCATION</scope>
    <scope>SUBUNIT</scope>
</reference>
<reference evidence="42 43" key="15">
    <citation type="journal article" date="2022" name="Mol. Cell">
        <title>Direct epitranscriptomic regulation of mammalian translation initiation through N4-acetylcytidine.</title>
        <authorList>
            <person name="Arango D."/>
            <person name="Sturgill D."/>
            <person name="Yang R."/>
            <person name="Kanai T."/>
            <person name="Bauer P."/>
            <person name="Roy J."/>
            <person name="Wang Z."/>
            <person name="Hosogane M."/>
            <person name="Schiffers S."/>
            <person name="Oberdoerffer S."/>
        </authorList>
    </citation>
    <scope>STRUCTURE BY ELECTRON MICROSCOPY (2.80 ANGSTROMS) OF RIBOSOME</scope>
    <scope>SUBCELLULAR LOCATION</scope>
    <scope>SUBUNIT</scope>
</reference>
<reference evidence="44 45" key="16">
    <citation type="journal article" date="2022" name="Science">
        <title>Structure of the mammalian ribosome as it decodes the selenocysteine UGA codon.</title>
        <authorList>
            <person name="Hilal T."/>
            <person name="Killam B.Y."/>
            <person name="Grozdanovic M."/>
            <person name="Dobosz-Bartoszek M."/>
            <person name="Loerke J."/>
            <person name="Buerger J."/>
            <person name="Mielke T."/>
            <person name="Copeland P.R."/>
            <person name="Simonovic M."/>
            <person name="Spahn C.M.T."/>
        </authorList>
    </citation>
    <scope>STRUCTURE BY ELECTRON MICROSCOPY (2.80 ANGSTROMS) OF RIBOSOME</scope>
    <scope>SUBCELLULAR LOCATION</scope>
    <scope>SUBUNIT</scope>
</reference>
<reference evidence="39" key="17">
    <citation type="journal article" date="2023" name="Nature">
        <title>A molecular network of conserved factors keeps ribosomes dormant in the egg.</title>
        <authorList>
            <person name="Leesch F."/>
            <person name="Lorenzo-Orts L."/>
            <person name="Pribitzer C."/>
            <person name="Grishkovskaya I."/>
            <person name="Roehsner J."/>
            <person name="Chugunova A."/>
            <person name="Matzinger M."/>
            <person name="Roitinger E."/>
            <person name="Belacic K."/>
            <person name="Kandolf S."/>
            <person name="Lin T.Y."/>
            <person name="Mechtler K."/>
            <person name="Meinhart A."/>
            <person name="Haselbach D."/>
            <person name="Pauli A."/>
        </authorList>
    </citation>
    <scope>STRUCTURE BY ELECTRON MICROSCOPY (2.30 ANGSTROMS) OF RIBOSOME</scope>
    <scope>SUBCELLULAR LOCATION</scope>
    <scope>SUBUNIT</scope>
</reference>
<sequence length="145" mass="17013">MAEVEQKKKRTFRKFTYRGVDLDQLLDMSYEQLMQLYSARQRRRLSRGLRRKQHSLLKRLRKAKKEAPPMEKPEVVKTHLRDMIILPEMVGSMVGVYNGKTFNQVEIKPEMIGHYLGEFSITYKPVKHGRPGIGATHSSRFIPLK</sequence>
<accession>G1U0Q2</accession>
<comment type="function">
    <text evidence="2 3 4 5">Component of the small ribosomal subunit (PubMed:23873042, PubMed:25601755, PubMed:26245381, PubMed:27863242). The ribosome is a large ribonucleoprotein complex responsible for the synthesis of proteins in the cell (PubMed:23873042, PubMed:25601755, PubMed:26245381, PubMed:27863242).</text>
</comment>
<comment type="subunit">
    <text evidence="2 3 4 5 6 7 8 9 10 11 12 13 14 15 16 17">Component of the small ribosomal subunit.</text>
</comment>
<comment type="subcellular location">
    <subcellularLocation>
        <location evidence="2 3 4 5 6 7 8 9 10 11 12 13 14 15 16 17">Cytoplasm</location>
    </subcellularLocation>
</comment>
<comment type="similarity">
    <text evidence="18">Belongs to the universal ribosomal protein uS19 family.</text>
</comment>
<proteinExistence type="evidence at protein level"/>
<gene>
    <name type="primary">RPS15</name>
</gene>
<keyword id="KW-0002">3D-structure</keyword>
<keyword id="KW-0007">Acetylation</keyword>
<keyword id="KW-0963">Cytoplasm</keyword>
<keyword id="KW-1017">Isopeptide bond</keyword>
<keyword id="KW-1185">Reference proteome</keyword>
<keyword id="KW-0687">Ribonucleoprotein</keyword>
<keyword id="KW-0689">Ribosomal protein</keyword>
<keyword id="KW-0832">Ubl conjugation</keyword>
<organism>
    <name type="scientific">Oryctolagus cuniculus</name>
    <name type="common">Rabbit</name>
    <dbReference type="NCBI Taxonomy" id="9986"/>
    <lineage>
        <taxon>Eukaryota</taxon>
        <taxon>Metazoa</taxon>
        <taxon>Chordata</taxon>
        <taxon>Craniata</taxon>
        <taxon>Vertebrata</taxon>
        <taxon>Euteleostomi</taxon>
        <taxon>Mammalia</taxon>
        <taxon>Eutheria</taxon>
        <taxon>Euarchontoglires</taxon>
        <taxon>Glires</taxon>
        <taxon>Lagomorpha</taxon>
        <taxon>Leporidae</taxon>
        <taxon>Oryctolagus</taxon>
    </lineage>
</organism>